<protein>
    <recommendedName>
        <fullName evidence="1">Tryptophan synthase alpha chain</fullName>
        <ecNumber evidence="1">4.2.1.20</ecNumber>
    </recommendedName>
</protein>
<feature type="chain" id="PRO_1000018311" description="Tryptophan synthase alpha chain">
    <location>
        <begin position="1"/>
        <end position="268"/>
    </location>
</feature>
<feature type="active site" description="Proton acceptor" evidence="1">
    <location>
        <position position="49"/>
    </location>
</feature>
<feature type="active site" description="Proton acceptor" evidence="1">
    <location>
        <position position="60"/>
    </location>
</feature>
<dbReference type="EC" id="4.2.1.20" evidence="1"/>
<dbReference type="EMBL" id="CP000308">
    <property type="protein sequence ID" value="ABG13529.1"/>
    <property type="molecule type" value="Genomic_DNA"/>
</dbReference>
<dbReference type="RefSeq" id="WP_002210634.1">
    <property type="nucleotide sequence ID" value="NZ_CP009906.1"/>
</dbReference>
<dbReference type="SMR" id="Q1C7P3"/>
<dbReference type="GeneID" id="57976464"/>
<dbReference type="KEGG" id="ypa:YPA_1563"/>
<dbReference type="UniPathway" id="UPA00035">
    <property type="reaction ID" value="UER00044"/>
</dbReference>
<dbReference type="Proteomes" id="UP000001971">
    <property type="component" value="Chromosome"/>
</dbReference>
<dbReference type="GO" id="GO:0005829">
    <property type="term" value="C:cytosol"/>
    <property type="evidence" value="ECO:0007669"/>
    <property type="project" value="TreeGrafter"/>
</dbReference>
<dbReference type="GO" id="GO:0004834">
    <property type="term" value="F:tryptophan synthase activity"/>
    <property type="evidence" value="ECO:0007669"/>
    <property type="project" value="UniProtKB-UniRule"/>
</dbReference>
<dbReference type="CDD" id="cd04724">
    <property type="entry name" value="Tryptophan_synthase_alpha"/>
    <property type="match status" value="1"/>
</dbReference>
<dbReference type="FunFam" id="3.20.20.70:FF:000037">
    <property type="entry name" value="Tryptophan synthase alpha chain"/>
    <property type="match status" value="1"/>
</dbReference>
<dbReference type="Gene3D" id="3.20.20.70">
    <property type="entry name" value="Aldolase class I"/>
    <property type="match status" value="1"/>
</dbReference>
<dbReference type="HAMAP" id="MF_00131">
    <property type="entry name" value="Trp_synth_alpha"/>
    <property type="match status" value="1"/>
</dbReference>
<dbReference type="InterPro" id="IPR013785">
    <property type="entry name" value="Aldolase_TIM"/>
</dbReference>
<dbReference type="InterPro" id="IPR011060">
    <property type="entry name" value="RibuloseP-bd_barrel"/>
</dbReference>
<dbReference type="InterPro" id="IPR018204">
    <property type="entry name" value="Trp_synthase_alpha_AS"/>
</dbReference>
<dbReference type="InterPro" id="IPR002028">
    <property type="entry name" value="Trp_synthase_suA"/>
</dbReference>
<dbReference type="NCBIfam" id="TIGR00262">
    <property type="entry name" value="trpA"/>
    <property type="match status" value="1"/>
</dbReference>
<dbReference type="PANTHER" id="PTHR43406:SF1">
    <property type="entry name" value="TRYPTOPHAN SYNTHASE ALPHA CHAIN, CHLOROPLASTIC"/>
    <property type="match status" value="1"/>
</dbReference>
<dbReference type="PANTHER" id="PTHR43406">
    <property type="entry name" value="TRYPTOPHAN SYNTHASE, ALPHA CHAIN"/>
    <property type="match status" value="1"/>
</dbReference>
<dbReference type="Pfam" id="PF00290">
    <property type="entry name" value="Trp_syntA"/>
    <property type="match status" value="1"/>
</dbReference>
<dbReference type="SUPFAM" id="SSF51366">
    <property type="entry name" value="Ribulose-phoshate binding barrel"/>
    <property type="match status" value="1"/>
</dbReference>
<dbReference type="PROSITE" id="PS00167">
    <property type="entry name" value="TRP_SYNTHASE_ALPHA"/>
    <property type="match status" value="1"/>
</dbReference>
<accession>Q1C7P3</accession>
<keyword id="KW-0028">Amino-acid biosynthesis</keyword>
<keyword id="KW-0057">Aromatic amino acid biosynthesis</keyword>
<keyword id="KW-0456">Lyase</keyword>
<keyword id="KW-0822">Tryptophan biosynthesis</keyword>
<gene>
    <name evidence="1" type="primary">trpA</name>
    <name type="ordered locus">YPA_1563</name>
</gene>
<proteinExistence type="inferred from homology"/>
<name>TRPA_YERPA</name>
<comment type="function">
    <text evidence="1">The alpha subunit is responsible for the aldol cleavage of indoleglycerol phosphate to indole and glyceraldehyde 3-phosphate.</text>
</comment>
<comment type="catalytic activity">
    <reaction evidence="1">
        <text>(1S,2R)-1-C-(indol-3-yl)glycerol 3-phosphate + L-serine = D-glyceraldehyde 3-phosphate + L-tryptophan + H2O</text>
        <dbReference type="Rhea" id="RHEA:10532"/>
        <dbReference type="ChEBI" id="CHEBI:15377"/>
        <dbReference type="ChEBI" id="CHEBI:33384"/>
        <dbReference type="ChEBI" id="CHEBI:57912"/>
        <dbReference type="ChEBI" id="CHEBI:58866"/>
        <dbReference type="ChEBI" id="CHEBI:59776"/>
        <dbReference type="EC" id="4.2.1.20"/>
    </reaction>
</comment>
<comment type="pathway">
    <text evidence="1">Amino-acid biosynthesis; L-tryptophan biosynthesis; L-tryptophan from chorismate: step 5/5.</text>
</comment>
<comment type="subunit">
    <text evidence="1">Tetramer of two alpha and two beta chains.</text>
</comment>
<comment type="similarity">
    <text evidence="1">Belongs to the TrpA family.</text>
</comment>
<evidence type="ECO:0000255" key="1">
    <source>
        <dbReference type="HAMAP-Rule" id="MF_00131"/>
    </source>
</evidence>
<sequence length="268" mass="28579">MERYQQLFKQLAAKKEGAFVPFVQLGDPSPAMSLNIIDTLIAAGADALELGIPFSDPLADGPTIQNAALRAFAAGVTPGICFEILAEIRQKHPTIPIGLLMYANLVFHNGIDHFYQRCAEVGVDSVLIADVPFEESAPFRAAALRHGIAPIFICPPNADDDLLREIASHGRGYTYLLSRAGVTGAENHGQLPLNHLVDKLREYNAAPALQGFGISEPAQVKASLAAGAAGAISGSAIVKIIEKNVAQPVEMLVQLTRFVTEMKAATRS</sequence>
<organism>
    <name type="scientific">Yersinia pestis bv. Antiqua (strain Antiqua)</name>
    <dbReference type="NCBI Taxonomy" id="360102"/>
    <lineage>
        <taxon>Bacteria</taxon>
        <taxon>Pseudomonadati</taxon>
        <taxon>Pseudomonadota</taxon>
        <taxon>Gammaproteobacteria</taxon>
        <taxon>Enterobacterales</taxon>
        <taxon>Yersiniaceae</taxon>
        <taxon>Yersinia</taxon>
    </lineage>
</organism>
<reference key="1">
    <citation type="journal article" date="2006" name="J. Bacteriol.">
        <title>Complete genome sequence of Yersinia pestis strains Antiqua and Nepal516: evidence of gene reduction in an emerging pathogen.</title>
        <authorList>
            <person name="Chain P.S.G."/>
            <person name="Hu P."/>
            <person name="Malfatti S.A."/>
            <person name="Radnedge L."/>
            <person name="Larimer F."/>
            <person name="Vergez L.M."/>
            <person name="Worsham P."/>
            <person name="Chu M.C."/>
            <person name="Andersen G.L."/>
        </authorList>
    </citation>
    <scope>NUCLEOTIDE SEQUENCE [LARGE SCALE GENOMIC DNA]</scope>
    <source>
        <strain>Antiqua</strain>
    </source>
</reference>